<evidence type="ECO:0000250" key="1">
    <source>
        <dbReference type="UniProtKB" id="A3KQ86"/>
    </source>
</evidence>
<evidence type="ECO:0000250" key="2">
    <source>
        <dbReference type="UniProtKB" id="P47987"/>
    </source>
</evidence>
<evidence type="ECO:0000250" key="3">
    <source>
        <dbReference type="UniProtKB" id="Q9Y342"/>
    </source>
</evidence>
<evidence type="ECO:0000255" key="4"/>
<evidence type="ECO:0000255" key="5">
    <source>
        <dbReference type="PROSITE-ProRule" id="PRU00581"/>
    </source>
</evidence>
<evidence type="ECO:0000256" key="6">
    <source>
        <dbReference type="SAM" id="MobiDB-lite"/>
    </source>
</evidence>
<evidence type="ECO:0000269" key="7">
    <source>
    </source>
</evidence>
<evidence type="ECO:0000303" key="8">
    <source>
    </source>
</evidence>
<evidence type="ECO:0000305" key="9"/>
<gene>
    <name type="primary">PLLP</name>
</gene>
<reference key="1">
    <citation type="submission" date="2007-06" db="EMBL/GenBank/DDBJ databases">
        <authorList>
            <consortium name="NIH - Mammalian Gene Collection (MGC) project"/>
        </authorList>
    </citation>
    <scope>NUCLEOTIDE SEQUENCE [LARGE SCALE MRNA]</scope>
    <source>
        <strain>Hereford</strain>
        <tissue>Hippocampus</tissue>
    </source>
</reference>
<reference key="2">
    <citation type="journal article" date="1990" name="J. Neurochem.">
        <title>Presence of the plasma membrane proteolipid (plasmolipin) in myelin.</title>
        <authorList>
            <person name="Cochary E.F."/>
            <person name="Bizzozero O.A."/>
            <person name="Sapirstein V.S."/>
            <person name="Nolan C.E."/>
            <person name="Fischer I."/>
        </authorList>
    </citation>
    <scope>SUBCELLULAR LOCATION</scope>
</reference>
<proteinExistence type="evidence at transcript level"/>
<feature type="chain" id="PRO_0000332210" description="Plasmolipin">
    <location>
        <begin position="1"/>
        <end position="182"/>
    </location>
</feature>
<feature type="topological domain" description="Cytoplasmic" evidence="4">
    <location>
        <begin position="1"/>
        <end position="35"/>
    </location>
</feature>
<feature type="transmembrane region" description="Helical" evidence="4">
    <location>
        <begin position="36"/>
        <end position="56"/>
    </location>
</feature>
<feature type="topological domain" description="Extracellular" evidence="4">
    <location>
        <begin position="57"/>
        <end position="68"/>
    </location>
</feature>
<feature type="transmembrane region" description="Helical" evidence="4">
    <location>
        <begin position="69"/>
        <end position="89"/>
    </location>
</feature>
<feature type="topological domain" description="Cytoplasmic" evidence="4">
    <location>
        <begin position="90"/>
        <end position="99"/>
    </location>
</feature>
<feature type="transmembrane region" description="Helical" evidence="4">
    <location>
        <begin position="100"/>
        <end position="120"/>
    </location>
</feature>
<feature type="topological domain" description="Extracellular" evidence="4">
    <location>
        <begin position="121"/>
        <end position="141"/>
    </location>
</feature>
<feature type="transmembrane region" description="Helical" evidence="4">
    <location>
        <begin position="142"/>
        <end position="162"/>
    </location>
</feature>
<feature type="topological domain" description="Cytoplasmic" evidence="4">
    <location>
        <begin position="163"/>
        <end position="182"/>
    </location>
</feature>
<feature type="domain" description="MARVEL" evidence="5">
    <location>
        <begin position="32"/>
        <end position="166"/>
    </location>
</feature>
<feature type="region of interest" description="Disordered" evidence="6">
    <location>
        <begin position="1"/>
        <end position="20"/>
    </location>
</feature>
<feature type="compositionally biased region" description="Polar residues" evidence="6">
    <location>
        <begin position="7"/>
        <end position="16"/>
    </location>
</feature>
<organism>
    <name type="scientific">Bos taurus</name>
    <name type="common">Bovine</name>
    <dbReference type="NCBI Taxonomy" id="9913"/>
    <lineage>
        <taxon>Eukaryota</taxon>
        <taxon>Metazoa</taxon>
        <taxon>Chordata</taxon>
        <taxon>Craniata</taxon>
        <taxon>Vertebrata</taxon>
        <taxon>Euteleostomi</taxon>
        <taxon>Mammalia</taxon>
        <taxon>Eutheria</taxon>
        <taxon>Laurasiatheria</taxon>
        <taxon>Artiodactyla</taxon>
        <taxon>Ruminantia</taxon>
        <taxon>Pecora</taxon>
        <taxon>Bovidae</taxon>
        <taxon>Bovinae</taxon>
        <taxon>Bos</taxon>
    </lineage>
</organism>
<keyword id="KW-1003">Cell membrane</keyword>
<keyword id="KW-0472">Membrane</keyword>
<keyword id="KW-1185">Reference proteome</keyword>
<keyword id="KW-0812">Transmembrane</keyword>
<keyword id="KW-1133">Transmembrane helix</keyword>
<dbReference type="EMBL" id="BC146177">
    <property type="protein sequence ID" value="AAI46178.1"/>
    <property type="molecule type" value="mRNA"/>
</dbReference>
<dbReference type="RefSeq" id="NP_001092593.1">
    <property type="nucleotide sequence ID" value="NM_001099123.1"/>
</dbReference>
<dbReference type="SMR" id="A6H7B0"/>
<dbReference type="FunCoup" id="A6H7B0">
    <property type="interactions" value="134"/>
</dbReference>
<dbReference type="STRING" id="9913.ENSBTAP00000049090"/>
<dbReference type="PaxDb" id="9913-ENSBTAP00000032317"/>
<dbReference type="Ensembl" id="ENSBTAT00000056565.2">
    <property type="protein sequence ID" value="ENSBTAP00000049090.2"/>
    <property type="gene ID" value="ENSBTAG00000011700.7"/>
</dbReference>
<dbReference type="GeneID" id="613446"/>
<dbReference type="KEGG" id="bta:613446"/>
<dbReference type="CTD" id="51090"/>
<dbReference type="VEuPathDB" id="HostDB:ENSBTAG00000011700"/>
<dbReference type="VGNC" id="VGNC:33037">
    <property type="gene designation" value="PLLP"/>
</dbReference>
<dbReference type="GeneTree" id="ENSGT00940000156011"/>
<dbReference type="InParanoid" id="A6H7B0"/>
<dbReference type="OMA" id="MYATAFI"/>
<dbReference type="OrthoDB" id="6258237at2759"/>
<dbReference type="Proteomes" id="UP000009136">
    <property type="component" value="Chromosome 18"/>
</dbReference>
<dbReference type="Bgee" id="ENSBTAG00000011700">
    <property type="expression patterns" value="Expressed in midbrain and 92 other cell types or tissues"/>
</dbReference>
<dbReference type="GO" id="GO:0016324">
    <property type="term" value="C:apical plasma membrane"/>
    <property type="evidence" value="ECO:0007669"/>
    <property type="project" value="UniProtKB-SubCell"/>
</dbReference>
<dbReference type="GO" id="GO:0016020">
    <property type="term" value="C:membrane"/>
    <property type="evidence" value="ECO:0000318"/>
    <property type="project" value="GO_Central"/>
</dbReference>
<dbReference type="GO" id="GO:0043209">
    <property type="term" value="C:myelin sheath"/>
    <property type="evidence" value="ECO:0000314"/>
    <property type="project" value="UniProtKB"/>
</dbReference>
<dbReference type="GO" id="GO:0019911">
    <property type="term" value="F:structural constituent of myelin sheath"/>
    <property type="evidence" value="ECO:0000318"/>
    <property type="project" value="GO_Central"/>
</dbReference>
<dbReference type="GO" id="GO:0042552">
    <property type="term" value="P:myelination"/>
    <property type="evidence" value="ECO:0000318"/>
    <property type="project" value="GO_Central"/>
</dbReference>
<dbReference type="GO" id="GO:0030100">
    <property type="term" value="P:regulation of endocytosis"/>
    <property type="evidence" value="ECO:0000250"/>
    <property type="project" value="UniProtKB"/>
</dbReference>
<dbReference type="InterPro" id="IPR013295">
    <property type="entry name" value="MAL"/>
</dbReference>
<dbReference type="InterPro" id="IPR008253">
    <property type="entry name" value="Marvel"/>
</dbReference>
<dbReference type="InterPro" id="IPR050578">
    <property type="entry name" value="MARVEL-CKLF_proteins"/>
</dbReference>
<dbReference type="PANTHER" id="PTHR22776">
    <property type="entry name" value="MARVEL-CONTAINING POTENTIAL LIPID RAFT-ASSOCIATED PROTEIN"/>
    <property type="match status" value="1"/>
</dbReference>
<dbReference type="PANTHER" id="PTHR22776:SF9">
    <property type="entry name" value="PLASMOLIPIN"/>
    <property type="match status" value="1"/>
</dbReference>
<dbReference type="Pfam" id="PF01284">
    <property type="entry name" value="MARVEL"/>
    <property type="match status" value="1"/>
</dbReference>
<dbReference type="PRINTS" id="PR01884">
    <property type="entry name" value="MALPROTEIN"/>
</dbReference>
<dbReference type="PROSITE" id="PS51225">
    <property type="entry name" value="MARVEL"/>
    <property type="match status" value="1"/>
</dbReference>
<comment type="function">
    <text evidence="1 3">Main component of the myelin sheath that plays an important role in myelin membrane biogenesis and myelination (By similarity). Plays an essential function in apical endocytosis. Regulates epithelial development through the regulation of apical endocytosis (By similarity). Part of the intracellular machinery that mediates basolateral-to-apical transport of ICAM-1, an essential adhesion receptor in epithelial cells, from the subapical compartment in hepatic epithelial cells (By similarity).</text>
</comment>
<comment type="subunit">
    <text evidence="3">Forms oligomers.</text>
</comment>
<comment type="subcellular location">
    <subcellularLocation>
        <location evidence="3">Cell membrane</location>
        <topology evidence="4">Multi-pass membrane protein</topology>
    </subcellularLocation>
    <subcellularLocation>
        <location evidence="7">Myelin membrane</location>
        <topology evidence="4">Multi-pass membrane protein</topology>
    </subcellularLocation>
    <subcellularLocation>
        <location evidence="2">Apical cell membrane</location>
        <topology evidence="4">Multi-pass membrane protein</topology>
    </subcellularLocation>
    <text evidence="1 2 3">In polarized cells, localized predominantly in the apical membrane (By similarity). Located in lipid raft (By similarity). Recycled between the plasma membrane and the Golgi complex (By similarity). PLLP is continuously recirculating in the cell (By similarity).</text>
</comment>
<comment type="PTM">
    <text evidence="2">Phosphorylated.</text>
</comment>
<comment type="similarity">
    <text evidence="9">Belongs to the MAL family.</text>
</comment>
<name>PLLP_BOVIN</name>
<protein>
    <recommendedName>
        <fullName evidence="8">Plasmolipin</fullName>
    </recommendedName>
    <alternativeName>
        <fullName>Plasma membrane proteolipid</fullName>
    </alternativeName>
</protein>
<sequence>MAEFPSKVNTRTSSPAQGGGAVVSTLSPDLGFVRSSLGALMLLQLVLGLLVWALIADTPYHLYPSYGWVMFVAVFLWLVTIIFFVLYLFQLHMKLYMVPWPLVLMVFNVGATVLYITAFITCSASVELTSLKGSQPYNQRAAASFFSCLVMIAYGVSAFLSFQAWRGVGSNAATSQMAGGYA</sequence>
<accession>A6H7B0</accession>